<evidence type="ECO:0000255" key="1"/>
<evidence type="ECO:0000255" key="2">
    <source>
        <dbReference type="PROSITE-ProRule" id="PRU00521"/>
    </source>
</evidence>
<evidence type="ECO:0000256" key="3">
    <source>
        <dbReference type="SAM" id="MobiDB-lite"/>
    </source>
</evidence>
<evidence type="ECO:0000269" key="4">
    <source>
    </source>
</evidence>
<keyword id="KW-1003">Cell membrane</keyword>
<keyword id="KW-1015">Disulfide bond</keyword>
<keyword id="KW-0297">G-protein coupled receptor</keyword>
<keyword id="KW-0325">Glycoprotein</keyword>
<keyword id="KW-0472">Membrane</keyword>
<keyword id="KW-0675">Receptor</keyword>
<keyword id="KW-1185">Reference proteome</keyword>
<keyword id="KW-0807">Transducer</keyword>
<keyword id="KW-0812">Transmembrane</keyword>
<keyword id="KW-1133">Transmembrane helix</keyword>
<feature type="chain" id="PRO_0000069917" description="Neuropeptide FF receptor 2">
    <location>
        <begin position="1"/>
        <end position="417"/>
    </location>
</feature>
<feature type="topological domain" description="Extracellular" evidence="1">
    <location>
        <begin position="1"/>
        <end position="45"/>
    </location>
</feature>
<feature type="transmembrane region" description="Helical; Name=1" evidence="1">
    <location>
        <begin position="46"/>
        <end position="66"/>
    </location>
</feature>
<feature type="topological domain" description="Cytoplasmic" evidence="1">
    <location>
        <begin position="67"/>
        <end position="82"/>
    </location>
</feature>
<feature type="transmembrane region" description="Helical; Name=2" evidence="1">
    <location>
        <begin position="83"/>
        <end position="103"/>
    </location>
</feature>
<feature type="topological domain" description="Extracellular" evidence="1">
    <location>
        <begin position="104"/>
        <end position="119"/>
    </location>
</feature>
<feature type="transmembrane region" description="Helical; Name=3" evidence="1">
    <location>
        <begin position="120"/>
        <end position="140"/>
    </location>
</feature>
<feature type="topological domain" description="Cytoplasmic" evidence="1">
    <location>
        <begin position="141"/>
        <end position="160"/>
    </location>
</feature>
<feature type="transmembrane region" description="Helical; Name=4" evidence="1">
    <location>
        <begin position="161"/>
        <end position="181"/>
    </location>
</feature>
<feature type="topological domain" description="Extracellular" evidence="1">
    <location>
        <begin position="182"/>
        <end position="217"/>
    </location>
</feature>
<feature type="transmembrane region" description="Helical; Name=5" evidence="1">
    <location>
        <begin position="218"/>
        <end position="238"/>
    </location>
</feature>
<feature type="topological domain" description="Cytoplasmic" evidence="1">
    <location>
        <begin position="239"/>
        <end position="274"/>
    </location>
</feature>
<feature type="transmembrane region" description="Helical; Name=6" evidence="1">
    <location>
        <begin position="275"/>
        <end position="295"/>
    </location>
</feature>
<feature type="topological domain" description="Extracellular" evidence="1">
    <location>
        <begin position="296"/>
        <end position="310"/>
    </location>
</feature>
<feature type="transmembrane region" description="Helical; Name=7" evidence="1">
    <location>
        <begin position="311"/>
        <end position="331"/>
    </location>
</feature>
<feature type="topological domain" description="Cytoplasmic" evidence="1">
    <location>
        <begin position="332"/>
        <end position="417"/>
    </location>
</feature>
<feature type="region of interest" description="Disordered" evidence="3">
    <location>
        <begin position="378"/>
        <end position="417"/>
    </location>
</feature>
<feature type="glycosylation site" description="N-linked (GlcNAc...) asparagine" evidence="1">
    <location>
        <position position="8"/>
    </location>
</feature>
<feature type="glycosylation site" description="N-linked (GlcNAc...) asparagine" evidence="1">
    <location>
        <position position="20"/>
    </location>
</feature>
<feature type="glycosylation site" description="N-linked (GlcNAc...) asparagine" evidence="1">
    <location>
        <position position="31"/>
    </location>
</feature>
<feature type="glycosylation site" description="N-linked (GlcNAc...) asparagine" evidence="1">
    <location>
        <position position="198"/>
    </location>
</feature>
<feature type="disulfide bond" evidence="2">
    <location>
        <begin position="118"/>
        <end position="206"/>
    </location>
</feature>
<gene>
    <name type="primary">Npffr2</name>
    <name type="synonym">Gpr74</name>
    <name type="synonym">Npff2</name>
    <name type="synonym">Npgpr</name>
</gene>
<organism>
    <name type="scientific">Rattus norvegicus</name>
    <name type="common">Rat</name>
    <dbReference type="NCBI Taxonomy" id="10116"/>
    <lineage>
        <taxon>Eukaryota</taxon>
        <taxon>Metazoa</taxon>
        <taxon>Chordata</taxon>
        <taxon>Craniata</taxon>
        <taxon>Vertebrata</taxon>
        <taxon>Euteleostomi</taxon>
        <taxon>Mammalia</taxon>
        <taxon>Eutheria</taxon>
        <taxon>Euarchontoglires</taxon>
        <taxon>Glires</taxon>
        <taxon>Rodentia</taxon>
        <taxon>Myomorpha</taxon>
        <taxon>Muroidea</taxon>
        <taxon>Muridae</taxon>
        <taxon>Murinae</taxon>
        <taxon>Rattus</taxon>
    </lineage>
</organism>
<sequence length="417" mass="47711">MGKRWDSNSSGSWDHIWSGNDTQHPWYSDINITYMNYYLHQPHVTAVFISSYFLIFFLCMVGNTVVCFVVIRNRYMHTVTNFFIFNLAISDLLVGIFCMPITLLDNIIAGWPFGSSMCKISGLVQGISVAASVFTLVAIAVDRFRCVVYPFKPKLTVKTAFVMIVIIWGLAITIMTPSAIMLHVQEEKYYRVRLSSHNKTSTVYWCREDWPNQEMRRIYTTVLFATIYLAPLSLIVIMYARIGASLFKTSAHSTGKQRLEQWHVSKKKQKVIKMLLTVALLFILSWLPLWTLMMLSDYADLSPNKLRVINIYVYPFAHWLAFCNSSVNPIIYGFFNENFRSGFQDAFQFCQKKVKPQEAYGLRAKRNLDINTSGLLVHEPASQNPSGENLGCRKSADNPTQESLMEETGEATNSTET</sequence>
<comment type="function">
    <text evidence="4">Receptor for NPAF (A-18-F-amide) and NPFF (F-8-F-amide) neuropeptides, also known as morphine-modulating peptides. Can also be activated by a variety of naturally occurring or synthetic FMRF-amide like ligands. This receptor mediates its action by association with G proteins that activate a phosphatidylinositol-calcium second messenger system.</text>
</comment>
<comment type="subcellular location">
    <subcellularLocation>
        <location evidence="4">Cell membrane</location>
        <topology evidence="1">Multi-pass membrane protein</topology>
    </subcellularLocation>
</comment>
<comment type="similarity">
    <text evidence="2">Belongs to the G-protein coupled receptor 1 family.</text>
</comment>
<protein>
    <recommendedName>
        <fullName>Neuropeptide FF receptor 2</fullName>
    </recommendedName>
    <alternativeName>
        <fullName>G-protein coupled receptor 74</fullName>
    </alternativeName>
    <alternativeName>
        <fullName>Neuropeptide G-protein coupled receptor</fullName>
    </alternativeName>
</protein>
<name>NPFF2_RAT</name>
<reference key="1">
    <citation type="journal article" date="2000" name="J. Biol. Chem.">
        <title>Identification and characterization of two G protein-coupled receptors for neuropeptide FF.</title>
        <authorList>
            <person name="Bonini J.A."/>
            <person name="Jones K.A."/>
            <person name="Adham N."/>
            <person name="Forray C."/>
            <person name="Artymyshyn R."/>
            <person name="Durkin M.M."/>
            <person name="Smith K.E."/>
            <person name="Tamm J.A."/>
            <person name="Boteju L.W."/>
            <person name="Lakhlani P.P."/>
            <person name="Raddatz R."/>
            <person name="Yao W.-J."/>
            <person name="Ogozalek K.L."/>
            <person name="Boyle N."/>
            <person name="Kouranova E.V."/>
            <person name="Quan Y."/>
            <person name="Vaysse P.J."/>
            <person name="Wetzel J.M."/>
            <person name="Branchek T.A."/>
            <person name="Gerald C."/>
            <person name="Borowsky B."/>
        </authorList>
    </citation>
    <scope>NUCLEOTIDE SEQUENCE [MRNA]</scope>
    <source>
        <strain>Sprague-Dawley</strain>
    </source>
</reference>
<dbReference type="EMBL" id="AF268900">
    <property type="protein sequence ID" value="AAG41399.1"/>
    <property type="molecule type" value="mRNA"/>
</dbReference>
<dbReference type="RefSeq" id="NP_001399325.1">
    <property type="nucleotide sequence ID" value="NM_001412396.1"/>
</dbReference>
<dbReference type="RefSeq" id="NP_076470.1">
    <property type="nucleotide sequence ID" value="NM_023980.2"/>
</dbReference>
<dbReference type="RefSeq" id="XP_006250849.1">
    <property type="nucleotide sequence ID" value="XM_006250787.3"/>
</dbReference>
<dbReference type="RefSeq" id="XP_017454875.1">
    <property type="nucleotide sequence ID" value="XM_017599386.1"/>
</dbReference>
<dbReference type="RefSeq" id="XP_063129721.1">
    <property type="nucleotide sequence ID" value="XM_063273651.1"/>
</dbReference>
<dbReference type="SMR" id="Q9EQD2"/>
<dbReference type="FunCoup" id="Q9EQD2">
    <property type="interactions" value="118"/>
</dbReference>
<dbReference type="STRING" id="10116.ENSRNOP00000004153"/>
<dbReference type="BindingDB" id="Q9EQD2"/>
<dbReference type="ChEMBL" id="CHEMBL3425"/>
<dbReference type="GlyCosmos" id="Q9EQD2">
    <property type="glycosylation" value="4 sites, No reported glycans"/>
</dbReference>
<dbReference type="GlyGen" id="Q9EQD2">
    <property type="glycosylation" value="4 sites"/>
</dbReference>
<dbReference type="PhosphoSitePlus" id="Q9EQD2"/>
<dbReference type="PaxDb" id="10116-ENSRNOP00000004153"/>
<dbReference type="Ensembl" id="ENSRNOT00000004153.4">
    <property type="protein sequence ID" value="ENSRNOP00000004153.1"/>
    <property type="gene ID" value="ENSRNOG00000003067.4"/>
</dbReference>
<dbReference type="GeneID" id="78964"/>
<dbReference type="KEGG" id="rno:78964"/>
<dbReference type="UCSC" id="RGD:620168">
    <property type="organism name" value="rat"/>
</dbReference>
<dbReference type="AGR" id="RGD:620168"/>
<dbReference type="CTD" id="10886"/>
<dbReference type="RGD" id="620168">
    <property type="gene designation" value="Npffr2"/>
</dbReference>
<dbReference type="eggNOG" id="KOG3656">
    <property type="taxonomic scope" value="Eukaryota"/>
</dbReference>
<dbReference type="GeneTree" id="ENSGT01130000278294"/>
<dbReference type="HOGENOM" id="CLU_009579_6_1_1"/>
<dbReference type="InParanoid" id="Q9EQD2"/>
<dbReference type="OMA" id="TRPVYWC"/>
<dbReference type="OrthoDB" id="5953793at2759"/>
<dbReference type="PhylomeDB" id="Q9EQD2"/>
<dbReference type="TreeFam" id="TF315303"/>
<dbReference type="Reactome" id="R-RNO-389397">
    <property type="pathway name" value="Orexin and neuropeptides FF and QRFP bind to their respective receptors"/>
</dbReference>
<dbReference type="Reactome" id="R-RNO-416476">
    <property type="pathway name" value="G alpha (q) signalling events"/>
</dbReference>
<dbReference type="PRO" id="PR:Q9EQD2"/>
<dbReference type="Proteomes" id="UP000002494">
    <property type="component" value="Chromosome 14"/>
</dbReference>
<dbReference type="Bgee" id="ENSRNOG00000003067">
    <property type="expression patterns" value="Expressed in heart and 2 other cell types or tissues"/>
</dbReference>
<dbReference type="GO" id="GO:0015629">
    <property type="term" value="C:actin cytoskeleton"/>
    <property type="evidence" value="ECO:0007669"/>
    <property type="project" value="Ensembl"/>
</dbReference>
<dbReference type="GO" id="GO:0005886">
    <property type="term" value="C:plasma membrane"/>
    <property type="evidence" value="ECO:0000266"/>
    <property type="project" value="RGD"/>
</dbReference>
<dbReference type="GO" id="GO:0004930">
    <property type="term" value="F:G protein-coupled receptor activity"/>
    <property type="evidence" value="ECO:0000318"/>
    <property type="project" value="GO_Central"/>
</dbReference>
<dbReference type="GO" id="GO:0008188">
    <property type="term" value="F:neuropeptide receptor activity"/>
    <property type="evidence" value="ECO:0000266"/>
    <property type="project" value="RGD"/>
</dbReference>
<dbReference type="GO" id="GO:0031628">
    <property type="term" value="F:opioid receptor binding"/>
    <property type="evidence" value="ECO:0007669"/>
    <property type="project" value="InterPro"/>
</dbReference>
<dbReference type="GO" id="GO:0032870">
    <property type="term" value="P:cellular response to hormone stimulus"/>
    <property type="evidence" value="ECO:0000318"/>
    <property type="project" value="GO_Central"/>
</dbReference>
<dbReference type="GO" id="GO:0007186">
    <property type="term" value="P:G protein-coupled receptor signaling pathway"/>
    <property type="evidence" value="ECO:0000318"/>
    <property type="project" value="GO_Central"/>
</dbReference>
<dbReference type="GO" id="GO:0007218">
    <property type="term" value="P:neuropeptide signaling pathway"/>
    <property type="evidence" value="ECO:0000266"/>
    <property type="project" value="RGD"/>
</dbReference>
<dbReference type="GO" id="GO:0043408">
    <property type="term" value="P:regulation of MAPK cascade"/>
    <property type="evidence" value="ECO:0007669"/>
    <property type="project" value="InterPro"/>
</dbReference>
<dbReference type="FunFam" id="1.20.1070.10:FF:000137">
    <property type="entry name" value="neuropeptide FF receptor 2"/>
    <property type="match status" value="1"/>
</dbReference>
<dbReference type="Gene3D" id="1.20.1070.10">
    <property type="entry name" value="Rhodopsin 7-helix transmembrane proteins"/>
    <property type="match status" value="1"/>
</dbReference>
<dbReference type="InterPro" id="IPR000276">
    <property type="entry name" value="GPCR_Rhodpsn"/>
</dbReference>
<dbReference type="InterPro" id="IPR017452">
    <property type="entry name" value="GPCR_Rhodpsn_7TM"/>
</dbReference>
<dbReference type="InterPro" id="IPR005395">
    <property type="entry name" value="NPFF_rcpt"/>
</dbReference>
<dbReference type="InterPro" id="IPR005397">
    <property type="entry name" value="NPFF_rcpt_2"/>
</dbReference>
<dbReference type="PANTHER" id="PTHR24241:SF132">
    <property type="entry name" value="NEUROPEPTIDE FF RECEPTOR 2"/>
    <property type="match status" value="1"/>
</dbReference>
<dbReference type="PANTHER" id="PTHR24241">
    <property type="entry name" value="NEUROPEPTIDE RECEPTOR-RELATED G-PROTEIN COUPLED RECEPTOR"/>
    <property type="match status" value="1"/>
</dbReference>
<dbReference type="Pfam" id="PF00001">
    <property type="entry name" value="7tm_1"/>
    <property type="match status" value="1"/>
</dbReference>
<dbReference type="PRINTS" id="PR00237">
    <property type="entry name" value="GPCRRHODOPSN"/>
</dbReference>
<dbReference type="PRINTS" id="PR01570">
    <property type="entry name" value="NPFFRECEPTOR"/>
</dbReference>
<dbReference type="PRINTS" id="PR01572">
    <property type="entry name" value="NPFFRECEPTR2"/>
</dbReference>
<dbReference type="SMART" id="SM01381">
    <property type="entry name" value="7TM_GPCR_Srsx"/>
    <property type="match status" value="1"/>
</dbReference>
<dbReference type="SUPFAM" id="SSF81321">
    <property type="entry name" value="Family A G protein-coupled receptor-like"/>
    <property type="match status" value="1"/>
</dbReference>
<dbReference type="PROSITE" id="PS00237">
    <property type="entry name" value="G_PROTEIN_RECEP_F1_1"/>
    <property type="match status" value="1"/>
</dbReference>
<dbReference type="PROSITE" id="PS50262">
    <property type="entry name" value="G_PROTEIN_RECEP_F1_2"/>
    <property type="match status" value="1"/>
</dbReference>
<proteinExistence type="evidence at transcript level"/>
<accession>Q9EQD2</accession>